<dbReference type="EMBL" id="D50124">
    <property type="protein sequence ID" value="BAA08809.1"/>
    <property type="molecule type" value="Genomic_RNA"/>
</dbReference>
<dbReference type="SMR" id="Q98031"/>
<dbReference type="GO" id="GO:0044166">
    <property type="term" value="C:host cell endoplasmic reticulum lumen"/>
    <property type="evidence" value="ECO:0007669"/>
    <property type="project" value="UniProtKB-SubCell"/>
</dbReference>
<dbReference type="GO" id="GO:0039621">
    <property type="term" value="C:T=13 icosahedral viral capsid"/>
    <property type="evidence" value="ECO:0007669"/>
    <property type="project" value="UniProtKB-UniRule"/>
</dbReference>
<dbReference type="GO" id="GO:0039624">
    <property type="term" value="C:viral outer capsid"/>
    <property type="evidence" value="ECO:0007669"/>
    <property type="project" value="UniProtKB-UniRule"/>
</dbReference>
<dbReference type="GO" id="GO:0046872">
    <property type="term" value="F:metal ion binding"/>
    <property type="evidence" value="ECO:0007669"/>
    <property type="project" value="UniProtKB-KW"/>
</dbReference>
<dbReference type="Gene3D" id="3.40.50.11130">
    <property type="entry name" value="Glycoprotein VP7, domain 1"/>
    <property type="match status" value="1"/>
</dbReference>
<dbReference type="Gene3D" id="2.60.120.800">
    <property type="entry name" value="Rotavirus outer-layer protein VP7, domain 2"/>
    <property type="match status" value="1"/>
</dbReference>
<dbReference type="HAMAP" id="MF_04130">
    <property type="entry name" value="Rota_VP7"/>
    <property type="match status" value="1"/>
</dbReference>
<dbReference type="HAMAP" id="MF_04131">
    <property type="entry name" value="Rota_VP7_A"/>
    <property type="match status" value="1"/>
</dbReference>
<dbReference type="InterPro" id="IPR001963">
    <property type="entry name" value="VP7"/>
</dbReference>
<dbReference type="InterPro" id="IPR042207">
    <property type="entry name" value="VP7_1"/>
</dbReference>
<dbReference type="InterPro" id="IPR042210">
    <property type="entry name" value="VP7_2"/>
</dbReference>
<dbReference type="Pfam" id="PF00434">
    <property type="entry name" value="VP7"/>
    <property type="match status" value="1"/>
</dbReference>
<proteinExistence type="inferred from homology"/>
<protein>
    <recommendedName>
        <fullName evidence="2">Outer capsid glycoprotein VP7</fullName>
    </recommendedName>
</protein>
<accession>Q98031</accession>
<organism>
    <name type="scientific">Rotavirus A (strain RVA/Human/Japan/KUN/1980/G2P1B[4])</name>
    <name type="common">RV-A</name>
    <dbReference type="NCBI Taxonomy" id="578829"/>
    <lineage>
        <taxon>Viruses</taxon>
        <taxon>Riboviria</taxon>
        <taxon>Orthornavirae</taxon>
        <taxon>Duplornaviricota</taxon>
        <taxon>Resentoviricetes</taxon>
        <taxon>Reovirales</taxon>
        <taxon>Sedoreoviridae</taxon>
        <taxon>Rotavirus</taxon>
        <taxon>Rotavirus A</taxon>
    </lineage>
</organism>
<reference key="1">
    <citation type="journal article" date="1995" name="Microbiol. Immunol.">
        <title>Genetic variation in VP7 gene of human rotavirus serotype 2 (G2 type) isolated in Japan, China, and Pakistan.</title>
        <authorList>
            <person name="Wen L."/>
            <person name="Ushijima H."/>
            <person name="Kakizawa J."/>
            <person name="Fang Z.Y."/>
            <person name="Nishio O."/>
            <person name="Morikawa S."/>
            <person name="Motohiro T."/>
        </authorList>
    </citation>
    <scope>NUCLEOTIDE SEQUENCE [GENOMIC RNA]</scope>
</reference>
<keyword id="KW-0024">Alternative initiation</keyword>
<keyword id="KW-0106">Calcium</keyword>
<keyword id="KW-0167">Capsid protein</keyword>
<keyword id="KW-1015">Disulfide bond</keyword>
<keyword id="KW-0325">Glycoprotein</keyword>
<keyword id="KW-1038">Host endoplasmic reticulum</keyword>
<keyword id="KW-0945">Host-virus interaction</keyword>
<keyword id="KW-0479">Metal-binding</keyword>
<keyword id="KW-1152">Outer capsid protein</keyword>
<keyword id="KW-0732">Signal</keyword>
<keyword id="KW-1146">T=13 icosahedral capsid protein</keyword>
<keyword id="KW-0946">Virion</keyword>
<comment type="function">
    <text evidence="2">Calcium-binding protein that interacts with rotavirus cell receptors once the initial attachment by VP4 has been achieved. Rotavirus attachment and entry into the host cell probably involves multiple sequential contacts between the outer capsid proteins VP4 and VP7, and the cell receptors. Following entry into the host cell, low intracellular or intravesicular Ca(2+) concentration probably causes the calcium-stabilized VP7 trimers to dissociate from the virion. This step is probably necessary for the membrane-disrupting entry step and the release of VP4, which is locked onto the virion by VP7.</text>
</comment>
<comment type="subunit">
    <text evidence="2">Homotrimer; disulfide-linked. 2 Ca(2+) ions bound at each subunit interface in the trimer hold the trimer together. Interacts with the intermediate capsid protein VP6. Interacts with the outer capsid protein VP5*.</text>
</comment>
<comment type="subcellular location">
    <subcellularLocation>
        <location evidence="2">Virion</location>
    </subcellularLocation>
    <subcellularLocation>
        <location evidence="2">Host endoplasmic reticulum lumen</location>
    </subcellularLocation>
    <text evidence="2">The outer layer contains 780 copies of VP7, grouped as 260 trimers. Immature double-layered particles assembled in the cytoplasm bud across the membrane of the endoplasmic reticulum, acquiring during this process a transient lipid membrane that is modified with the ER resident viral glycoproteins NSP4 and VP7; these enveloped particles also contain VP4. As the particles move towards the interior of the ER cisternae, the transient lipid membrane and the non-structural protein NSP4 are lost, while the virus surface proteins VP4 and VP7 rearrange to form the outermost virus protein layer, yielding mature infectious triple-layered particles.</text>
</comment>
<comment type="alternative products">
    <event type="alternative initiation"/>
    <isoform>
        <id>Q98031-1</id>
        <name>1</name>
        <sequence type="displayed"/>
    </isoform>
    <isoform>
        <id>Q98031-2</id>
        <name>2</name>
        <sequence type="described" ref="VSP_038622"/>
    </isoform>
</comment>
<comment type="PTM">
    <text evidence="2">N-glycosylated.</text>
</comment>
<comment type="PTM">
    <text evidence="2">The N-terminus is blocked possibly by pyroglutamic acid.</text>
</comment>
<comment type="miscellaneous">
    <text evidence="2">Some rotavirus strains are neuraminidase-sensitive and require sialic acid to attach to the cell surface. Some rotavirus strains are integrin-dependent. Some rotavirus strains depend on ganglioside for their entry into the host cell. Hsp70 also seems to be involved in the entry of some strains.</text>
</comment>
<comment type="miscellaneous">
    <text evidence="2">In group A rotaviruses, VP7 defines the G serotype.</text>
</comment>
<comment type="miscellaneous">
    <molecule>Isoform 2</molecule>
    <text evidence="3">Produced by alternative initiation at Met-30 of isoform 1.</text>
</comment>
<comment type="similarity">
    <text evidence="2">Belongs to the rotavirus VP7 family.</text>
</comment>
<name>VP7_ROTKU</name>
<evidence type="ECO:0000255" key="1"/>
<evidence type="ECO:0000255" key="2">
    <source>
        <dbReference type="HAMAP-Rule" id="MF_04131"/>
    </source>
</evidence>
<evidence type="ECO:0000305" key="3"/>
<organismHost>
    <name type="scientific">Homo sapiens</name>
    <name type="common">Human</name>
    <dbReference type="NCBI Taxonomy" id="9606"/>
</organismHost>
<sequence length="326" mass="37101">MYGIGNTTILTILISIILLNYILKTITNTMDYIIFRFLLLIALISPFVRTPNYGMYLPITGSLDAVYTNSTSGESFLTSTLCLYYPTEAKNEISDDEWENTLSQLFLTKGWPTGSVYFKDYNDITTFSMNPQLYCDYNVVLMRYDNTSELDASELADLILNEWLCNPMDISLHYYQQSSESNKWISMGTDCTVKVCPLNTQTLGIGCKTTDVNTFEIVASSEKLVITDVVNGVNHKINISMSTCTIRNCNKLGPRENVAIIQVGGPNALDITADPTTVPQVQRIMRINWKKWWQVFYTVVDYINQIIQVMSKRSRSLDTAAFYYRI</sequence>
<feature type="signal peptide" evidence="2">
    <location>
        <begin position="1"/>
        <end position="50"/>
    </location>
</feature>
<feature type="chain" id="PRO_0000369114" description="Outer capsid glycoprotein VP7" evidence="2">
    <location>
        <begin position="51"/>
        <end position="326"/>
    </location>
</feature>
<feature type="region of interest" description="CNP motif; interaction with ITGAV/ITGB3" evidence="2">
    <location>
        <begin position="165"/>
        <end position="167"/>
    </location>
</feature>
<feature type="region of interest" description="GPR motif; interaction with ITGAX/ITGB2" evidence="2">
    <location>
        <begin position="253"/>
        <end position="255"/>
    </location>
</feature>
<feature type="binding site" evidence="2">
    <location>
        <position position="95"/>
    </location>
    <ligand>
        <name>Ca(2+)</name>
        <dbReference type="ChEBI" id="CHEBI:29108"/>
        <label>1</label>
    </ligand>
</feature>
<feature type="binding site" evidence="2">
    <location>
        <position position="177"/>
    </location>
    <ligand>
        <name>Ca(2+)</name>
        <dbReference type="ChEBI" id="CHEBI:29108"/>
        <label>2</label>
    </ligand>
</feature>
<feature type="binding site" evidence="2">
    <location>
        <position position="206"/>
    </location>
    <ligand>
        <name>Ca(2+)</name>
        <dbReference type="ChEBI" id="CHEBI:29108"/>
        <label>1</label>
    </ligand>
</feature>
<feature type="binding site" evidence="2">
    <location>
        <position position="214"/>
    </location>
    <ligand>
        <name>Ca(2+)</name>
        <dbReference type="ChEBI" id="CHEBI:29108"/>
        <label>1</label>
    </ligand>
</feature>
<feature type="binding site" evidence="2">
    <location>
        <position position="216"/>
    </location>
    <ligand>
        <name>Ca(2+)</name>
        <dbReference type="ChEBI" id="CHEBI:29108"/>
        <label>1</label>
    </ligand>
</feature>
<feature type="binding site" evidence="2">
    <location>
        <position position="228"/>
    </location>
    <ligand>
        <name>Ca(2+)</name>
        <dbReference type="ChEBI" id="CHEBI:29108"/>
        <label>2</label>
    </ligand>
</feature>
<feature type="binding site" evidence="2">
    <location>
        <position position="229"/>
    </location>
    <ligand>
        <name>Ca(2+)</name>
        <dbReference type="ChEBI" id="CHEBI:29108"/>
        <label>2</label>
    </ligand>
</feature>
<feature type="binding site" evidence="2">
    <location>
        <position position="301"/>
    </location>
    <ligand>
        <name>Ca(2+)</name>
        <dbReference type="ChEBI" id="CHEBI:29108"/>
        <label>2</label>
    </ligand>
</feature>
<feature type="glycosylation site" description="N-linked (GlcNAc...) asparagine; by host" evidence="1">
    <location>
        <position position="69"/>
    </location>
</feature>
<feature type="glycosylation site" description="N-linked (GlcNAc...) asparagine; by host" evidence="1">
    <location>
        <position position="146"/>
    </location>
</feature>
<feature type="glycosylation site" description="N-linked (GlcNAc...) asparagine; by host" evidence="1">
    <location>
        <position position="238"/>
    </location>
</feature>
<feature type="disulfide bond" evidence="2">
    <location>
        <begin position="82"/>
        <end position="135"/>
    </location>
</feature>
<feature type="disulfide bond" evidence="2">
    <location>
        <begin position="165"/>
        <end position="249"/>
    </location>
</feature>
<feature type="disulfide bond" evidence="2">
    <location>
        <begin position="191"/>
        <end position="244"/>
    </location>
</feature>
<feature type="disulfide bond" evidence="2">
    <location>
        <begin position="196"/>
        <end position="207"/>
    </location>
</feature>
<feature type="splice variant" id="VSP_038622" description="In isoform 2." evidence="3">
    <location>
        <begin position="1"/>
        <end position="29"/>
    </location>
</feature>